<organism>
    <name type="scientific">Anaplasma phagocytophilum (strain HZ)</name>
    <dbReference type="NCBI Taxonomy" id="212042"/>
    <lineage>
        <taxon>Bacteria</taxon>
        <taxon>Pseudomonadati</taxon>
        <taxon>Pseudomonadota</taxon>
        <taxon>Alphaproteobacteria</taxon>
        <taxon>Rickettsiales</taxon>
        <taxon>Anaplasmataceae</taxon>
        <taxon>Anaplasma</taxon>
        <taxon>phagocytophilum group</taxon>
    </lineage>
</organism>
<evidence type="ECO:0000255" key="1">
    <source>
        <dbReference type="HAMAP-Rule" id="MF_00089"/>
    </source>
</evidence>
<dbReference type="EC" id="4.1.99.17" evidence="1"/>
<dbReference type="EMBL" id="CP000235">
    <property type="protein sequence ID" value="ABD44449.1"/>
    <property type="molecule type" value="Genomic_DNA"/>
</dbReference>
<dbReference type="RefSeq" id="WP_011450711.1">
    <property type="nucleotide sequence ID" value="NC_007797.1"/>
</dbReference>
<dbReference type="SMR" id="Q2GKB1"/>
<dbReference type="STRING" id="212042.APH_0600"/>
<dbReference type="PaxDb" id="212042-APH_0600"/>
<dbReference type="EnsemblBacteria" id="ABD44449">
    <property type="protein sequence ID" value="ABD44449"/>
    <property type="gene ID" value="APH_0600"/>
</dbReference>
<dbReference type="GeneID" id="92748299"/>
<dbReference type="KEGG" id="aph:APH_0600"/>
<dbReference type="eggNOG" id="COG0422">
    <property type="taxonomic scope" value="Bacteria"/>
</dbReference>
<dbReference type="HOGENOM" id="CLU_013181_2_1_5"/>
<dbReference type="UniPathway" id="UPA00060"/>
<dbReference type="Proteomes" id="UP000001943">
    <property type="component" value="Chromosome"/>
</dbReference>
<dbReference type="GO" id="GO:0005829">
    <property type="term" value="C:cytosol"/>
    <property type="evidence" value="ECO:0007669"/>
    <property type="project" value="TreeGrafter"/>
</dbReference>
<dbReference type="GO" id="GO:0051539">
    <property type="term" value="F:4 iron, 4 sulfur cluster binding"/>
    <property type="evidence" value="ECO:0007669"/>
    <property type="project" value="UniProtKB-KW"/>
</dbReference>
<dbReference type="GO" id="GO:0016830">
    <property type="term" value="F:carbon-carbon lyase activity"/>
    <property type="evidence" value="ECO:0007669"/>
    <property type="project" value="InterPro"/>
</dbReference>
<dbReference type="GO" id="GO:0008270">
    <property type="term" value="F:zinc ion binding"/>
    <property type="evidence" value="ECO:0007669"/>
    <property type="project" value="UniProtKB-UniRule"/>
</dbReference>
<dbReference type="GO" id="GO:0009228">
    <property type="term" value="P:thiamine biosynthetic process"/>
    <property type="evidence" value="ECO:0007669"/>
    <property type="project" value="UniProtKB-KW"/>
</dbReference>
<dbReference type="GO" id="GO:0009229">
    <property type="term" value="P:thiamine diphosphate biosynthetic process"/>
    <property type="evidence" value="ECO:0007669"/>
    <property type="project" value="UniProtKB-UniRule"/>
</dbReference>
<dbReference type="FunFam" id="3.20.20.540:FF:000001">
    <property type="entry name" value="Phosphomethylpyrimidine synthase"/>
    <property type="match status" value="1"/>
</dbReference>
<dbReference type="Gene3D" id="6.10.250.620">
    <property type="match status" value="1"/>
</dbReference>
<dbReference type="Gene3D" id="3.20.20.540">
    <property type="entry name" value="Radical SAM ThiC family, central domain"/>
    <property type="match status" value="1"/>
</dbReference>
<dbReference type="HAMAP" id="MF_00089">
    <property type="entry name" value="ThiC"/>
    <property type="match status" value="1"/>
</dbReference>
<dbReference type="InterPro" id="IPR037509">
    <property type="entry name" value="ThiC"/>
</dbReference>
<dbReference type="InterPro" id="IPR025747">
    <property type="entry name" value="ThiC-associated_dom"/>
</dbReference>
<dbReference type="InterPro" id="IPR038521">
    <property type="entry name" value="ThiC/Bza_core_dom"/>
</dbReference>
<dbReference type="InterPro" id="IPR002817">
    <property type="entry name" value="ThiC/BzaA/B"/>
</dbReference>
<dbReference type="NCBIfam" id="NF006763">
    <property type="entry name" value="PRK09284.1"/>
    <property type="match status" value="1"/>
</dbReference>
<dbReference type="NCBIfam" id="NF009895">
    <property type="entry name" value="PRK13352.1"/>
    <property type="match status" value="1"/>
</dbReference>
<dbReference type="NCBIfam" id="TIGR00190">
    <property type="entry name" value="thiC"/>
    <property type="match status" value="1"/>
</dbReference>
<dbReference type="PANTHER" id="PTHR30557:SF1">
    <property type="entry name" value="PHOSPHOMETHYLPYRIMIDINE SYNTHASE, CHLOROPLASTIC"/>
    <property type="match status" value="1"/>
</dbReference>
<dbReference type="PANTHER" id="PTHR30557">
    <property type="entry name" value="THIAMINE BIOSYNTHESIS PROTEIN THIC"/>
    <property type="match status" value="1"/>
</dbReference>
<dbReference type="Pfam" id="PF13667">
    <property type="entry name" value="ThiC-associated"/>
    <property type="match status" value="1"/>
</dbReference>
<dbReference type="Pfam" id="PF01964">
    <property type="entry name" value="ThiC_Rad_SAM"/>
    <property type="match status" value="1"/>
</dbReference>
<dbReference type="SFLD" id="SFLDF00407">
    <property type="entry name" value="phosphomethylpyrimidine_syntha"/>
    <property type="match status" value="1"/>
</dbReference>
<dbReference type="SFLD" id="SFLDG01114">
    <property type="entry name" value="phosphomethylpyrimidine_syntha"/>
    <property type="match status" value="1"/>
</dbReference>
<dbReference type="SFLD" id="SFLDS00113">
    <property type="entry name" value="Radical_SAM_Phosphomethylpyrim"/>
    <property type="match status" value="1"/>
</dbReference>
<name>THIC_ANAPZ</name>
<proteinExistence type="inferred from homology"/>
<reference key="1">
    <citation type="journal article" date="2006" name="PLoS Genet.">
        <title>Comparative genomics of emerging human ehrlichiosis agents.</title>
        <authorList>
            <person name="Dunning Hotopp J.C."/>
            <person name="Lin M."/>
            <person name="Madupu R."/>
            <person name="Crabtree J."/>
            <person name="Angiuoli S.V."/>
            <person name="Eisen J.A."/>
            <person name="Seshadri R."/>
            <person name="Ren Q."/>
            <person name="Wu M."/>
            <person name="Utterback T.R."/>
            <person name="Smith S."/>
            <person name="Lewis M."/>
            <person name="Khouri H."/>
            <person name="Zhang C."/>
            <person name="Niu H."/>
            <person name="Lin Q."/>
            <person name="Ohashi N."/>
            <person name="Zhi N."/>
            <person name="Nelson W.C."/>
            <person name="Brinkac L.M."/>
            <person name="Dodson R.J."/>
            <person name="Rosovitz M.J."/>
            <person name="Sundaram J.P."/>
            <person name="Daugherty S.C."/>
            <person name="Davidsen T."/>
            <person name="Durkin A.S."/>
            <person name="Gwinn M.L."/>
            <person name="Haft D.H."/>
            <person name="Selengut J.D."/>
            <person name="Sullivan S.A."/>
            <person name="Zafar N."/>
            <person name="Zhou L."/>
            <person name="Benahmed F."/>
            <person name="Forberger H."/>
            <person name="Halpin R."/>
            <person name="Mulligan S."/>
            <person name="Robinson J."/>
            <person name="White O."/>
            <person name="Rikihisa Y."/>
            <person name="Tettelin H."/>
        </authorList>
    </citation>
    <scope>NUCLEOTIDE SEQUENCE [LARGE SCALE GENOMIC DNA]</scope>
    <source>
        <strain>HZ</strain>
    </source>
</reference>
<protein>
    <recommendedName>
        <fullName evidence="1">Phosphomethylpyrimidine synthase</fullName>
        <ecNumber evidence="1">4.1.99.17</ecNumber>
    </recommendedName>
    <alternativeName>
        <fullName evidence="1">Hydroxymethylpyrimidine phosphate synthase</fullName>
        <shortName evidence="1">HMP-P synthase</shortName>
        <shortName evidence="1">HMP-phosphate synthase</shortName>
        <shortName evidence="1">HMPP synthase</shortName>
    </alternativeName>
    <alternativeName>
        <fullName evidence="1">Thiamine biosynthesis protein ThiC</fullName>
    </alternativeName>
</protein>
<accession>Q2GKB1</accession>
<sequence length="557" mass="61561">MHMNISEIYPSSNKIYINCTLYPDVKVGMRQINIRNSSQRFLLYDTAGPYTDCDIKVNLTEGISSIRRDWIARRNDTYPIRKAKTNSDARGVKALSGDDRVILKGIAGGAPVTQLFYAKKGIITPEMEYVAVRENALLEQAEAIPGLLLPTKTRKITPEFVREEVACGRAVIPSNINHPESEPMIIGRNFLVKINANIGNSAVLSNIEDEVKKMVLAVTYGADTVMDLSTGHDIHNIRELIVRNSPVPIGTVPIYQALNKVNGIVGDLSFEVFKETIIEQAEQGVDYFTIHAGVLKSYIEHTRSRTTGIVSRGGAIMAQWCLLHNKENFLYENFEEICEIMRSYDVTFSLGDGLRPGSINDANDVAQFLELRTLGELVKIARAHDCQVIVEGPGHVPMHLIEENVKKQLDFCDEAPFYTLGPLTTDIAPGYDHITSAIGAAMIGWYGTAMLCYVTPKEHLGLPNAEDVKAGVISYKIAAHAADLAKGNPASFARDYALSQARYDFRWEDQFNLSIDPATAKKLHDESLPGKGGKTAHFCSMCGPKFCSMKLSKALND</sequence>
<feature type="chain" id="PRO_0000242235" description="Phosphomethylpyrimidine synthase">
    <location>
        <begin position="1"/>
        <end position="557"/>
    </location>
</feature>
<feature type="binding site" evidence="1">
    <location>
        <position position="197"/>
    </location>
    <ligand>
        <name>substrate</name>
    </ligand>
</feature>
<feature type="binding site" evidence="1">
    <location>
        <position position="226"/>
    </location>
    <ligand>
        <name>substrate</name>
    </ligand>
</feature>
<feature type="binding site" evidence="1">
    <location>
        <position position="255"/>
    </location>
    <ligand>
        <name>substrate</name>
    </ligand>
</feature>
<feature type="binding site" evidence="1">
    <location>
        <position position="291"/>
    </location>
    <ligand>
        <name>substrate</name>
    </ligand>
</feature>
<feature type="binding site" evidence="1">
    <location>
        <begin position="311"/>
        <end position="313"/>
    </location>
    <ligand>
        <name>substrate</name>
    </ligand>
</feature>
<feature type="binding site" evidence="1">
    <location>
        <begin position="352"/>
        <end position="355"/>
    </location>
    <ligand>
        <name>substrate</name>
    </ligand>
</feature>
<feature type="binding site" evidence="1">
    <location>
        <position position="391"/>
    </location>
    <ligand>
        <name>substrate</name>
    </ligand>
</feature>
<feature type="binding site" evidence="1">
    <location>
        <position position="395"/>
    </location>
    <ligand>
        <name>Zn(2+)</name>
        <dbReference type="ChEBI" id="CHEBI:29105"/>
    </ligand>
</feature>
<feature type="binding site" evidence="1">
    <location>
        <position position="418"/>
    </location>
    <ligand>
        <name>substrate</name>
    </ligand>
</feature>
<feature type="binding site" evidence="1">
    <location>
        <position position="459"/>
    </location>
    <ligand>
        <name>Zn(2+)</name>
        <dbReference type="ChEBI" id="CHEBI:29105"/>
    </ligand>
</feature>
<feature type="binding site" evidence="1">
    <location>
        <position position="539"/>
    </location>
    <ligand>
        <name>[4Fe-4S] cluster</name>
        <dbReference type="ChEBI" id="CHEBI:49883"/>
        <note>4Fe-4S-S-AdoMet</note>
    </ligand>
</feature>
<feature type="binding site" evidence="1">
    <location>
        <position position="542"/>
    </location>
    <ligand>
        <name>[4Fe-4S] cluster</name>
        <dbReference type="ChEBI" id="CHEBI:49883"/>
        <note>4Fe-4S-S-AdoMet</note>
    </ligand>
</feature>
<feature type="binding site" evidence="1">
    <location>
        <position position="547"/>
    </location>
    <ligand>
        <name>[4Fe-4S] cluster</name>
        <dbReference type="ChEBI" id="CHEBI:49883"/>
        <note>4Fe-4S-S-AdoMet</note>
    </ligand>
</feature>
<comment type="function">
    <text evidence="1">Catalyzes the synthesis of the hydroxymethylpyrimidine phosphate (HMP-P) moiety of thiamine from aminoimidazole ribotide (AIR) in a radical S-adenosyl-L-methionine (SAM)-dependent reaction.</text>
</comment>
<comment type="catalytic activity">
    <reaction evidence="1">
        <text>5-amino-1-(5-phospho-beta-D-ribosyl)imidazole + S-adenosyl-L-methionine = 4-amino-2-methyl-5-(phosphooxymethyl)pyrimidine + CO + 5'-deoxyadenosine + formate + L-methionine + 3 H(+)</text>
        <dbReference type="Rhea" id="RHEA:24840"/>
        <dbReference type="ChEBI" id="CHEBI:15378"/>
        <dbReference type="ChEBI" id="CHEBI:15740"/>
        <dbReference type="ChEBI" id="CHEBI:17245"/>
        <dbReference type="ChEBI" id="CHEBI:17319"/>
        <dbReference type="ChEBI" id="CHEBI:57844"/>
        <dbReference type="ChEBI" id="CHEBI:58354"/>
        <dbReference type="ChEBI" id="CHEBI:59789"/>
        <dbReference type="ChEBI" id="CHEBI:137981"/>
        <dbReference type="EC" id="4.1.99.17"/>
    </reaction>
</comment>
<comment type="cofactor">
    <cofactor evidence="1">
        <name>[4Fe-4S] cluster</name>
        <dbReference type="ChEBI" id="CHEBI:49883"/>
    </cofactor>
    <text evidence="1">Binds 1 [4Fe-4S] cluster per subunit. The cluster is coordinated with 3 cysteines and an exchangeable S-adenosyl-L-methionine.</text>
</comment>
<comment type="pathway">
    <text evidence="1">Cofactor biosynthesis; thiamine diphosphate biosynthesis.</text>
</comment>
<comment type="subunit">
    <text evidence="1">Homodimer.</text>
</comment>
<comment type="similarity">
    <text evidence="1">Belongs to the ThiC family.</text>
</comment>
<keyword id="KW-0004">4Fe-4S</keyword>
<keyword id="KW-0408">Iron</keyword>
<keyword id="KW-0411">Iron-sulfur</keyword>
<keyword id="KW-0456">Lyase</keyword>
<keyword id="KW-0479">Metal-binding</keyword>
<keyword id="KW-0949">S-adenosyl-L-methionine</keyword>
<keyword id="KW-0784">Thiamine biosynthesis</keyword>
<keyword id="KW-0862">Zinc</keyword>
<gene>
    <name evidence="1" type="primary">thiC</name>
    <name type="ordered locus">APH_0600</name>
</gene>